<evidence type="ECO:0000255" key="1">
    <source>
        <dbReference type="HAMAP-Rule" id="MF_00583"/>
    </source>
</evidence>
<feature type="chain" id="PRO_0000141181" description="Ribose-phosphate pyrophosphokinase">
    <location>
        <begin position="1"/>
        <end position="310"/>
    </location>
</feature>
<feature type="active site" evidence="1">
    <location>
        <position position="190"/>
    </location>
</feature>
<feature type="binding site" evidence="1">
    <location>
        <begin position="34"/>
        <end position="36"/>
    </location>
    <ligand>
        <name>ATP</name>
        <dbReference type="ChEBI" id="CHEBI:30616"/>
    </ligand>
</feature>
<feature type="binding site" evidence="1">
    <location>
        <begin position="93"/>
        <end position="94"/>
    </location>
    <ligand>
        <name>ATP</name>
        <dbReference type="ChEBI" id="CHEBI:30616"/>
    </ligand>
</feature>
<feature type="binding site" evidence="1">
    <location>
        <position position="127"/>
    </location>
    <ligand>
        <name>Mg(2+)</name>
        <dbReference type="ChEBI" id="CHEBI:18420"/>
        <label>1</label>
    </ligand>
</feature>
<feature type="binding site" evidence="1">
    <location>
        <position position="167"/>
    </location>
    <ligand>
        <name>Mg(2+)</name>
        <dbReference type="ChEBI" id="CHEBI:18420"/>
        <label>2</label>
    </ligand>
</feature>
<feature type="binding site" evidence="1">
    <location>
        <position position="192"/>
    </location>
    <ligand>
        <name>D-ribose 5-phosphate</name>
        <dbReference type="ChEBI" id="CHEBI:78346"/>
    </ligand>
</feature>
<feature type="binding site" evidence="1">
    <location>
        <position position="216"/>
    </location>
    <ligand>
        <name>D-ribose 5-phosphate</name>
        <dbReference type="ChEBI" id="CHEBI:78346"/>
    </ligand>
</feature>
<feature type="binding site" evidence="1">
    <location>
        <begin position="220"/>
        <end position="224"/>
    </location>
    <ligand>
        <name>D-ribose 5-phosphate</name>
        <dbReference type="ChEBI" id="CHEBI:78346"/>
    </ligand>
</feature>
<organism>
    <name type="scientific">Rhizobium meliloti (strain 1021)</name>
    <name type="common">Ensifer meliloti</name>
    <name type="synonym">Sinorhizobium meliloti</name>
    <dbReference type="NCBI Taxonomy" id="266834"/>
    <lineage>
        <taxon>Bacteria</taxon>
        <taxon>Pseudomonadati</taxon>
        <taxon>Pseudomonadota</taxon>
        <taxon>Alphaproteobacteria</taxon>
        <taxon>Hyphomicrobiales</taxon>
        <taxon>Rhizobiaceae</taxon>
        <taxon>Sinorhizobium/Ensifer group</taxon>
        <taxon>Sinorhizobium</taxon>
    </lineage>
</organism>
<comment type="function">
    <text evidence="1">Involved in the biosynthesis of the central metabolite phospho-alpha-D-ribosyl-1-pyrophosphate (PRPP) via the transfer of pyrophosphoryl group from ATP to 1-hydroxyl of ribose-5-phosphate (Rib-5-P).</text>
</comment>
<comment type="catalytic activity">
    <reaction evidence="1">
        <text>D-ribose 5-phosphate + ATP = 5-phospho-alpha-D-ribose 1-diphosphate + AMP + H(+)</text>
        <dbReference type="Rhea" id="RHEA:15609"/>
        <dbReference type="ChEBI" id="CHEBI:15378"/>
        <dbReference type="ChEBI" id="CHEBI:30616"/>
        <dbReference type="ChEBI" id="CHEBI:58017"/>
        <dbReference type="ChEBI" id="CHEBI:78346"/>
        <dbReference type="ChEBI" id="CHEBI:456215"/>
        <dbReference type="EC" id="2.7.6.1"/>
    </reaction>
</comment>
<comment type="cofactor">
    <cofactor evidence="1">
        <name>Mg(2+)</name>
        <dbReference type="ChEBI" id="CHEBI:18420"/>
    </cofactor>
    <text evidence="1">Binds 2 Mg(2+) ions per subunit.</text>
</comment>
<comment type="pathway">
    <text evidence="1">Metabolic intermediate biosynthesis; 5-phospho-alpha-D-ribose 1-diphosphate biosynthesis; 5-phospho-alpha-D-ribose 1-diphosphate from D-ribose 5-phosphate (route I): step 1/1.</text>
</comment>
<comment type="subunit">
    <text evidence="1">Homohexamer.</text>
</comment>
<comment type="subcellular location">
    <subcellularLocation>
        <location evidence="1">Cytoplasm</location>
    </subcellularLocation>
</comment>
<comment type="similarity">
    <text evidence="1">Belongs to the ribose-phosphate pyrophosphokinase family. Class I subfamily.</text>
</comment>
<name>KPRS_RHIME</name>
<reference key="1">
    <citation type="journal article" date="2001" name="Proc. Natl. Acad. Sci. U.S.A.">
        <title>Analysis of the chromosome sequence of the legume symbiont Sinorhizobium meliloti strain 1021.</title>
        <authorList>
            <person name="Capela D."/>
            <person name="Barloy-Hubler F."/>
            <person name="Gouzy J."/>
            <person name="Bothe G."/>
            <person name="Ampe F."/>
            <person name="Batut J."/>
            <person name="Boistard P."/>
            <person name="Becker A."/>
            <person name="Boutry M."/>
            <person name="Cadieu E."/>
            <person name="Dreano S."/>
            <person name="Gloux S."/>
            <person name="Godrie T."/>
            <person name="Goffeau A."/>
            <person name="Kahn D."/>
            <person name="Kiss E."/>
            <person name="Lelaure V."/>
            <person name="Masuy D."/>
            <person name="Pohl T."/>
            <person name="Portetelle D."/>
            <person name="Puehler A."/>
            <person name="Purnelle B."/>
            <person name="Ramsperger U."/>
            <person name="Renard C."/>
            <person name="Thebault P."/>
            <person name="Vandenbol M."/>
            <person name="Weidner S."/>
            <person name="Galibert F."/>
        </authorList>
    </citation>
    <scope>NUCLEOTIDE SEQUENCE [LARGE SCALE GENOMIC DNA]</scope>
    <source>
        <strain>1021</strain>
    </source>
</reference>
<reference key="2">
    <citation type="journal article" date="2001" name="Science">
        <title>The composite genome of the legume symbiont Sinorhizobium meliloti.</title>
        <authorList>
            <person name="Galibert F."/>
            <person name="Finan T.M."/>
            <person name="Long S.R."/>
            <person name="Puehler A."/>
            <person name="Abola P."/>
            <person name="Ampe F."/>
            <person name="Barloy-Hubler F."/>
            <person name="Barnett M.J."/>
            <person name="Becker A."/>
            <person name="Boistard P."/>
            <person name="Bothe G."/>
            <person name="Boutry M."/>
            <person name="Bowser L."/>
            <person name="Buhrmester J."/>
            <person name="Cadieu E."/>
            <person name="Capela D."/>
            <person name="Chain P."/>
            <person name="Cowie A."/>
            <person name="Davis R.W."/>
            <person name="Dreano S."/>
            <person name="Federspiel N.A."/>
            <person name="Fisher R.F."/>
            <person name="Gloux S."/>
            <person name="Godrie T."/>
            <person name="Goffeau A."/>
            <person name="Golding B."/>
            <person name="Gouzy J."/>
            <person name="Gurjal M."/>
            <person name="Hernandez-Lucas I."/>
            <person name="Hong A."/>
            <person name="Huizar L."/>
            <person name="Hyman R.W."/>
            <person name="Jones T."/>
            <person name="Kahn D."/>
            <person name="Kahn M.L."/>
            <person name="Kalman S."/>
            <person name="Keating D.H."/>
            <person name="Kiss E."/>
            <person name="Komp C."/>
            <person name="Lelaure V."/>
            <person name="Masuy D."/>
            <person name="Palm C."/>
            <person name="Peck M.C."/>
            <person name="Pohl T.M."/>
            <person name="Portetelle D."/>
            <person name="Purnelle B."/>
            <person name="Ramsperger U."/>
            <person name="Surzycki R."/>
            <person name="Thebault P."/>
            <person name="Vandenbol M."/>
            <person name="Vorhoelter F.J."/>
            <person name="Weidner S."/>
            <person name="Wells D.H."/>
            <person name="Wong K."/>
            <person name="Yeh K.-C."/>
            <person name="Batut J."/>
        </authorList>
    </citation>
    <scope>NUCLEOTIDE SEQUENCE [LARGE SCALE GENOMIC DNA]</scope>
    <source>
        <strain>1021</strain>
    </source>
</reference>
<sequence length="310" mass="33521">MKVFAGNSNRLLAEAICNYLNLPLGKATVRRFADQEIFVEIGENVRGEDVFIVQSTSFPTNDHLMELLIMIDAVRRSSARRITAVLPYFGYARQDRKPGPRTPISAKLVANLITEAGADRVLTLDLHAGQIQGFFDIPTDNLYAIPILARDVKENYNLKNVMVVSPDVGGVVRARALAKRLDCLLAIVDKRRDRPGESEVMNVIGEVNGKDCLLIDDIVDSGGTLCNAAEALLKNGATSVTAYITHGVLSGGAVARVTSSMLKELVITDSIQPTTAVQSAHNIRVISTAALLGEAISRTSQEESVSSLFD</sequence>
<keyword id="KW-0067">ATP-binding</keyword>
<keyword id="KW-0963">Cytoplasm</keyword>
<keyword id="KW-0418">Kinase</keyword>
<keyword id="KW-0460">Magnesium</keyword>
<keyword id="KW-0479">Metal-binding</keyword>
<keyword id="KW-0545">Nucleotide biosynthesis</keyword>
<keyword id="KW-0547">Nucleotide-binding</keyword>
<keyword id="KW-1185">Reference proteome</keyword>
<keyword id="KW-0808">Transferase</keyword>
<dbReference type="EC" id="2.7.6.1" evidence="1"/>
<dbReference type="EMBL" id="AL591688">
    <property type="protein sequence ID" value="CAC46927.1"/>
    <property type="molecule type" value="Genomic_DNA"/>
</dbReference>
<dbReference type="RefSeq" id="NP_386454.1">
    <property type="nucleotide sequence ID" value="NC_003047.1"/>
</dbReference>
<dbReference type="RefSeq" id="WP_003532875.1">
    <property type="nucleotide sequence ID" value="NC_003047.1"/>
</dbReference>
<dbReference type="SMR" id="Q92N73"/>
<dbReference type="EnsemblBacteria" id="CAC46927">
    <property type="protein sequence ID" value="CAC46927"/>
    <property type="gene ID" value="SMc02686"/>
</dbReference>
<dbReference type="KEGG" id="sme:SMc02686"/>
<dbReference type="PATRIC" id="fig|266834.11.peg.3828"/>
<dbReference type="eggNOG" id="COG0462">
    <property type="taxonomic scope" value="Bacteria"/>
</dbReference>
<dbReference type="HOGENOM" id="CLU_033546_1_0_5"/>
<dbReference type="OrthoDB" id="9777067at2"/>
<dbReference type="UniPathway" id="UPA00087">
    <property type="reaction ID" value="UER00172"/>
</dbReference>
<dbReference type="Proteomes" id="UP000001976">
    <property type="component" value="Chromosome"/>
</dbReference>
<dbReference type="GO" id="GO:0005737">
    <property type="term" value="C:cytoplasm"/>
    <property type="evidence" value="ECO:0007669"/>
    <property type="project" value="UniProtKB-SubCell"/>
</dbReference>
<dbReference type="GO" id="GO:0002189">
    <property type="term" value="C:ribose phosphate diphosphokinase complex"/>
    <property type="evidence" value="ECO:0007669"/>
    <property type="project" value="TreeGrafter"/>
</dbReference>
<dbReference type="GO" id="GO:0005524">
    <property type="term" value="F:ATP binding"/>
    <property type="evidence" value="ECO:0007669"/>
    <property type="project" value="UniProtKB-KW"/>
</dbReference>
<dbReference type="GO" id="GO:0016301">
    <property type="term" value="F:kinase activity"/>
    <property type="evidence" value="ECO:0007669"/>
    <property type="project" value="UniProtKB-KW"/>
</dbReference>
<dbReference type="GO" id="GO:0000287">
    <property type="term" value="F:magnesium ion binding"/>
    <property type="evidence" value="ECO:0007669"/>
    <property type="project" value="UniProtKB-UniRule"/>
</dbReference>
<dbReference type="GO" id="GO:0004749">
    <property type="term" value="F:ribose phosphate diphosphokinase activity"/>
    <property type="evidence" value="ECO:0007669"/>
    <property type="project" value="UniProtKB-UniRule"/>
</dbReference>
<dbReference type="GO" id="GO:0006015">
    <property type="term" value="P:5-phosphoribose 1-diphosphate biosynthetic process"/>
    <property type="evidence" value="ECO:0007669"/>
    <property type="project" value="UniProtKB-UniRule"/>
</dbReference>
<dbReference type="GO" id="GO:0006164">
    <property type="term" value="P:purine nucleotide biosynthetic process"/>
    <property type="evidence" value="ECO:0007669"/>
    <property type="project" value="TreeGrafter"/>
</dbReference>
<dbReference type="GO" id="GO:0009156">
    <property type="term" value="P:ribonucleoside monophosphate biosynthetic process"/>
    <property type="evidence" value="ECO:0007669"/>
    <property type="project" value="InterPro"/>
</dbReference>
<dbReference type="CDD" id="cd06223">
    <property type="entry name" value="PRTases_typeI"/>
    <property type="match status" value="1"/>
</dbReference>
<dbReference type="FunFam" id="3.40.50.2020:FF:000001">
    <property type="entry name" value="Ribose-phosphate pyrophosphokinase"/>
    <property type="match status" value="1"/>
</dbReference>
<dbReference type="Gene3D" id="3.40.50.2020">
    <property type="match status" value="2"/>
</dbReference>
<dbReference type="HAMAP" id="MF_00583_B">
    <property type="entry name" value="RibP_PPkinase_B"/>
    <property type="match status" value="1"/>
</dbReference>
<dbReference type="InterPro" id="IPR000842">
    <property type="entry name" value="PRib_PP_synth_CS"/>
</dbReference>
<dbReference type="InterPro" id="IPR029099">
    <property type="entry name" value="Pribosyltran_N"/>
</dbReference>
<dbReference type="InterPro" id="IPR000836">
    <property type="entry name" value="PRibTrfase_dom"/>
</dbReference>
<dbReference type="InterPro" id="IPR029057">
    <property type="entry name" value="PRTase-like"/>
</dbReference>
<dbReference type="InterPro" id="IPR005946">
    <property type="entry name" value="Rib-P_diPkinase"/>
</dbReference>
<dbReference type="InterPro" id="IPR037515">
    <property type="entry name" value="Rib-P_diPkinase_bac"/>
</dbReference>
<dbReference type="NCBIfam" id="NF002320">
    <property type="entry name" value="PRK01259.1"/>
    <property type="match status" value="1"/>
</dbReference>
<dbReference type="NCBIfam" id="TIGR01251">
    <property type="entry name" value="ribP_PPkin"/>
    <property type="match status" value="1"/>
</dbReference>
<dbReference type="PANTHER" id="PTHR10210">
    <property type="entry name" value="RIBOSE-PHOSPHATE DIPHOSPHOKINASE FAMILY MEMBER"/>
    <property type="match status" value="1"/>
</dbReference>
<dbReference type="PANTHER" id="PTHR10210:SF41">
    <property type="entry name" value="RIBOSE-PHOSPHATE PYROPHOSPHOKINASE 1, CHLOROPLASTIC"/>
    <property type="match status" value="1"/>
</dbReference>
<dbReference type="Pfam" id="PF00156">
    <property type="entry name" value="Pribosyltran"/>
    <property type="match status" value="1"/>
</dbReference>
<dbReference type="Pfam" id="PF13793">
    <property type="entry name" value="Pribosyltran_N"/>
    <property type="match status" value="1"/>
</dbReference>
<dbReference type="SMART" id="SM01400">
    <property type="entry name" value="Pribosyltran_N"/>
    <property type="match status" value="1"/>
</dbReference>
<dbReference type="SUPFAM" id="SSF53271">
    <property type="entry name" value="PRTase-like"/>
    <property type="match status" value="1"/>
</dbReference>
<dbReference type="PROSITE" id="PS00114">
    <property type="entry name" value="PRPP_SYNTHASE"/>
    <property type="match status" value="1"/>
</dbReference>
<gene>
    <name evidence="1" type="primary">prs</name>
    <name type="synonym">prsA</name>
    <name type="ordered locus">R02348</name>
    <name type="ORF">SMc02686</name>
</gene>
<protein>
    <recommendedName>
        <fullName evidence="1">Ribose-phosphate pyrophosphokinase</fullName>
        <shortName evidence="1">RPPK</shortName>
        <ecNumber evidence="1">2.7.6.1</ecNumber>
    </recommendedName>
    <alternativeName>
        <fullName evidence="1">5-phospho-D-ribosyl alpha-1-diphosphate synthase</fullName>
    </alternativeName>
    <alternativeName>
        <fullName evidence="1">Phosphoribosyl diphosphate synthase</fullName>
    </alternativeName>
    <alternativeName>
        <fullName evidence="1">Phosphoribosyl pyrophosphate synthase</fullName>
        <shortName evidence="1">P-Rib-PP synthase</shortName>
        <shortName evidence="1">PRPP synthase</shortName>
        <shortName evidence="1">PRPPase</shortName>
    </alternativeName>
</protein>
<accession>Q92N73</accession>
<proteinExistence type="inferred from homology"/>